<name>Y707_ENCCU</name>
<keyword id="KW-1185">Reference proteome</keyword>
<evidence type="ECO:0000256" key="1">
    <source>
        <dbReference type="SAM" id="MobiDB-lite"/>
    </source>
</evidence>
<evidence type="ECO:0000305" key="2"/>
<comment type="similarity">
    <text evidence="2">Belongs to the UPF0329 family.</text>
</comment>
<feature type="chain" id="PRO_0000223170" description="UPF0329 protein ECU07_0070">
    <location>
        <begin position="1"/>
        <end position="582"/>
    </location>
</feature>
<feature type="region of interest" description="Disordered" evidence="1">
    <location>
        <begin position="326"/>
        <end position="386"/>
    </location>
</feature>
<feature type="compositionally biased region" description="Basic residues" evidence="1">
    <location>
        <begin position="330"/>
        <end position="339"/>
    </location>
</feature>
<feature type="compositionally biased region" description="Basic and acidic residues" evidence="1">
    <location>
        <begin position="344"/>
        <end position="354"/>
    </location>
</feature>
<proteinExistence type="inferred from homology"/>
<dbReference type="EMBL" id="AL590447">
    <property type="protein sequence ID" value="CAD25539.2"/>
    <property type="molecule type" value="Genomic_DNA"/>
</dbReference>
<dbReference type="RefSeq" id="NP_585935.2">
    <property type="nucleotide sequence ID" value="NM_001041557.2"/>
</dbReference>
<dbReference type="SMR" id="Q8SV54"/>
<dbReference type="STRING" id="284813.Q8SV54"/>
<dbReference type="GeneID" id="859363"/>
<dbReference type="KEGG" id="ecu:ECU07_0070"/>
<dbReference type="VEuPathDB" id="MicrosporidiaDB:ECU07_0070"/>
<dbReference type="HOGENOM" id="CLU_035434_0_0_1"/>
<dbReference type="InParanoid" id="Q8SV54"/>
<dbReference type="OrthoDB" id="2200198at2759"/>
<dbReference type="Proteomes" id="UP000000819">
    <property type="component" value="Chromosome VII"/>
</dbReference>
<dbReference type="InterPro" id="IPR022115">
    <property type="entry name" value="DUF3654"/>
</dbReference>
<dbReference type="InterPro" id="IPR011667">
    <property type="entry name" value="UPF0329"/>
</dbReference>
<dbReference type="Pfam" id="PF07753">
    <property type="entry name" value="DUF1609"/>
    <property type="match status" value="1"/>
</dbReference>
<dbReference type="Pfam" id="PF12376">
    <property type="entry name" value="DUF3654"/>
    <property type="match status" value="1"/>
</dbReference>
<protein>
    <recommendedName>
        <fullName>UPF0329 protein ECU07_0070</fullName>
    </recommendedName>
</protein>
<reference key="1">
    <citation type="journal article" date="2001" name="Nature">
        <title>Genome sequence and gene compaction of the eukaryote parasite Encephalitozoon cuniculi.</title>
        <authorList>
            <person name="Katinka M.D."/>
            <person name="Duprat S."/>
            <person name="Cornillot E."/>
            <person name="Metenier G."/>
            <person name="Thomarat F."/>
            <person name="Prensier G."/>
            <person name="Barbe V."/>
            <person name="Peyretaillade E."/>
            <person name="Brottier P."/>
            <person name="Wincker P."/>
            <person name="Delbac F."/>
            <person name="El Alaoui H."/>
            <person name="Peyret P."/>
            <person name="Saurin W."/>
            <person name="Gouy M."/>
            <person name="Weissenbach J."/>
            <person name="Vivares C.P."/>
        </authorList>
    </citation>
    <scope>NUCLEOTIDE SEQUENCE [LARGE SCALE GENOMIC DNA]</scope>
    <source>
        <strain>GB-M1</strain>
    </source>
</reference>
<reference key="2">
    <citation type="journal article" date="2009" name="BMC Genomics">
        <title>Identification of transcriptional signals in Encephalitozoon cuniculi widespread among Microsporidia phylum: support for accurate structural genome annotation.</title>
        <authorList>
            <person name="Peyretaillade E."/>
            <person name="Goncalves O."/>
            <person name="Terrat S."/>
            <person name="Dugat-Bony E."/>
            <person name="Wincker P."/>
            <person name="Cornman R.S."/>
            <person name="Evans J.D."/>
            <person name="Delbac F."/>
            <person name="Peyret P."/>
        </authorList>
    </citation>
    <scope>GENOME REANNOTATION</scope>
    <source>
        <strain>GB-M1</strain>
    </source>
</reference>
<accession>Q8SV54</accession>
<organism>
    <name type="scientific">Encephalitozoon cuniculi (strain GB-M1)</name>
    <name type="common">Microsporidian parasite</name>
    <dbReference type="NCBI Taxonomy" id="284813"/>
    <lineage>
        <taxon>Eukaryota</taxon>
        <taxon>Fungi</taxon>
        <taxon>Fungi incertae sedis</taxon>
        <taxon>Microsporidia</taxon>
        <taxon>Unikaryonidae</taxon>
        <taxon>Encephalitozoon</taxon>
    </lineage>
</organism>
<sequence>MARKHAIWRFITLIGTVYCSSQVEHYDTFELEPGDQIILFPFIFKGNNIIALSTTRYRDLDRKRTYLVEDVIDFLGSISHVIWNFTVGRIVCADDNRFQRSFDEIMEGYLKEISLDATKIYMKGNKSFGELLEMIYERMFKFNDKRGNYILKYGSDITKKANDMIEDMPHDLDKKKKEEWEVFLNGIKKCGESFRDTEKWRQLIELEKIACNACKEICLDLKEEELMGLFAEGIMRKSLKVKLGEDEISSRGYLEYITISAKVLLGARKEHGGEVMKELVMQMLLGKKGEEIDKRYVDRVAGVVRERQRRREREIEKNMKELLRDEEKAKSKKKGKKKSVGVSEAKEEEKKESGTEEVEASEEVGIPSVEVGGARRKTGKKSKGDQKRFKIHSRVLRWRKSPEKIKEEWDRGSEERWKGRSLEEIKEQKIVHDITGVLELLRSEDADRFFMDAGEHMKGGSERQRMVAIGALETGGQRMTGVVEVGTFKDGDGCPVVYHLRFRPTSIGSIGDVINPGVVEASDVGRVDEGEECEDADKFVYPKGVRFETVKETGSFQIVWKNPSDTSEVLRRLIVYCRPCVI</sequence>
<gene>
    <name type="ordered locus">ECU07_0070</name>
</gene>